<evidence type="ECO:0000250" key="1"/>
<evidence type="ECO:0000250" key="2">
    <source>
        <dbReference type="UniProtKB" id="P02795"/>
    </source>
</evidence>
<evidence type="ECO:0000250" key="3">
    <source>
        <dbReference type="UniProtKB" id="P62339"/>
    </source>
</evidence>
<evidence type="ECO:0000305" key="4"/>
<comment type="function">
    <text evidence="1">Metallothioneins have a high content of cysteine residues that bind various heavy metals.</text>
</comment>
<comment type="domain">
    <text>Class I metallothioneins contain 2 metal-binding domains: four divalent ions are chelated within cluster A of the alpha domain and are coordinated via cysteinyl thiolate bridges to 11 cysteine ligands. Cluster B, the corresponding region within the beta domain, can ligate three divalent ions to 9 cysteines.</text>
</comment>
<comment type="similarity">
    <text evidence="4">Belongs to the metallothionein superfamily. Type 1 family.</text>
</comment>
<accession>Q9IB50</accession>
<gene>
    <name type="primary">mt</name>
</gene>
<proteinExistence type="inferred from homology"/>
<reference key="1">
    <citation type="submission" date="2000-02" db="EMBL/GenBank/DDBJ databases">
        <authorList>
            <person name="Miyata M."/>
            <person name="Iinuma K."/>
            <person name="Miyazaki T."/>
        </authorList>
    </citation>
    <scope>NUCLEOTIDE SEQUENCE [MRNA]</scope>
    <source>
        <tissue>Leukocyte</tissue>
    </source>
</reference>
<feature type="chain" id="PRO_0000197304" description="Metallothionein">
    <location>
        <begin position="1"/>
        <end position="60"/>
    </location>
</feature>
<feature type="region of interest" description="Beta">
    <location>
        <begin position="1"/>
        <end position="28"/>
    </location>
</feature>
<feature type="region of interest" description="Alpha">
    <location>
        <begin position="29"/>
        <end position="60"/>
    </location>
</feature>
<feature type="binding site" evidence="2">
    <location>
        <position position="4"/>
    </location>
    <ligand>
        <name>a divalent metal cation</name>
        <dbReference type="ChEBI" id="CHEBI:60240"/>
        <label>1</label>
        <note>in cluster B</note>
    </ligand>
</feature>
<feature type="binding site" evidence="2">
    <location>
        <position position="6"/>
    </location>
    <ligand>
        <name>a divalent metal cation</name>
        <dbReference type="ChEBI" id="CHEBI:60240"/>
        <label>1</label>
        <note>in cluster B</note>
    </ligand>
</feature>
<feature type="binding site" evidence="2">
    <location>
        <position position="6"/>
    </location>
    <ligand>
        <name>a divalent metal cation</name>
        <dbReference type="ChEBI" id="CHEBI:60240"/>
        <label>2</label>
        <note>in cluster B</note>
    </ligand>
</feature>
<feature type="binding site" evidence="2">
    <location>
        <position position="12"/>
    </location>
    <ligand>
        <name>a divalent metal cation</name>
        <dbReference type="ChEBI" id="CHEBI:60240"/>
        <label>2</label>
        <note>in cluster B</note>
    </ligand>
</feature>
<feature type="binding site" evidence="2">
    <location>
        <position position="14"/>
    </location>
    <ligand>
        <name>a divalent metal cation</name>
        <dbReference type="ChEBI" id="CHEBI:60240"/>
        <label>2</label>
        <note>in cluster B</note>
    </ligand>
</feature>
<feature type="binding site" evidence="2">
    <location>
        <position position="14"/>
    </location>
    <ligand>
        <name>a divalent metal cation</name>
        <dbReference type="ChEBI" id="CHEBI:60240"/>
        <label>3</label>
        <note>in cluster B</note>
    </ligand>
</feature>
<feature type="binding site" evidence="2">
    <location>
        <position position="18"/>
    </location>
    <ligand>
        <name>a divalent metal cation</name>
        <dbReference type="ChEBI" id="CHEBI:60240"/>
        <label>3</label>
        <note>in cluster B</note>
    </ligand>
</feature>
<feature type="binding site" evidence="2">
    <location>
        <position position="20"/>
    </location>
    <ligand>
        <name>a divalent metal cation</name>
        <dbReference type="ChEBI" id="CHEBI:60240"/>
        <label>1</label>
        <note>in cluster B</note>
    </ligand>
</feature>
<feature type="binding site" evidence="2">
    <location>
        <position position="23"/>
    </location>
    <ligand>
        <name>a divalent metal cation</name>
        <dbReference type="ChEBI" id="CHEBI:60240"/>
        <label>1</label>
        <note>in cluster B</note>
    </ligand>
</feature>
<feature type="binding site" evidence="2">
    <location>
        <position position="23"/>
    </location>
    <ligand>
        <name>a divalent metal cation</name>
        <dbReference type="ChEBI" id="CHEBI:60240"/>
        <label>3</label>
        <note>in cluster B</note>
    </ligand>
</feature>
<feature type="binding site" evidence="2">
    <location>
        <position position="25"/>
    </location>
    <ligand>
        <name>a divalent metal cation</name>
        <dbReference type="ChEBI" id="CHEBI:60240"/>
        <label>2</label>
        <note>in cluster B</note>
    </ligand>
</feature>
<feature type="binding site" evidence="2">
    <location>
        <position position="28"/>
    </location>
    <ligand>
        <name>a divalent metal cation</name>
        <dbReference type="ChEBI" id="CHEBI:60240"/>
        <label>3</label>
        <note>in cluster B</note>
    </ligand>
</feature>
<feature type="binding site" evidence="2">
    <location>
        <position position="32"/>
    </location>
    <ligand>
        <name>a divalent metal cation</name>
        <dbReference type="ChEBI" id="CHEBI:60240"/>
        <label>4</label>
        <note>in cluster A</note>
    </ligand>
</feature>
<feature type="binding site" evidence="2">
    <location>
        <position position="33"/>
    </location>
    <ligand>
        <name>a divalent metal cation</name>
        <dbReference type="ChEBI" id="CHEBI:60240"/>
        <label>4</label>
        <note>in cluster A</note>
    </ligand>
</feature>
<feature type="binding site" evidence="2">
    <location>
        <position position="33"/>
    </location>
    <ligand>
        <name>a divalent metal cation</name>
        <dbReference type="ChEBI" id="CHEBI:60240"/>
        <label>5</label>
        <note>in cluster A</note>
    </ligand>
</feature>
<feature type="binding site" evidence="2">
    <location>
        <position position="35"/>
    </location>
    <ligand>
        <name>a divalent metal cation</name>
        <dbReference type="ChEBI" id="CHEBI:60240"/>
        <label>5</label>
        <note>in cluster A</note>
    </ligand>
</feature>
<feature type="binding site" evidence="2">
    <location>
        <position position="36"/>
    </location>
    <ligand>
        <name>a divalent metal cation</name>
        <dbReference type="ChEBI" id="CHEBI:60240"/>
        <label>5</label>
        <note>in cluster A</note>
    </ligand>
</feature>
<feature type="binding site" evidence="2">
    <location>
        <position position="36"/>
    </location>
    <ligand>
        <name>a divalent metal cation</name>
        <dbReference type="ChEBI" id="CHEBI:60240"/>
        <label>6</label>
        <note>in cluster A</note>
    </ligand>
</feature>
<feature type="binding site" evidence="2">
    <location>
        <position position="40"/>
    </location>
    <ligand>
        <name>a divalent metal cation</name>
        <dbReference type="ChEBI" id="CHEBI:60240"/>
        <label>6</label>
        <note>in cluster A</note>
    </ligand>
</feature>
<feature type="binding site" evidence="2">
    <location>
        <position position="43"/>
    </location>
    <ligand>
        <name>a divalent metal cation</name>
        <dbReference type="ChEBI" id="CHEBI:60240"/>
        <label>4</label>
        <note>in cluster A</note>
    </ligand>
</feature>
<feature type="binding site" evidence="2">
    <location>
        <position position="43"/>
    </location>
    <ligand>
        <name>a divalent metal cation</name>
        <dbReference type="ChEBI" id="CHEBI:60240"/>
        <label>6</label>
        <note>in cluster A</note>
    </ligand>
</feature>
<feature type="binding site" evidence="2">
    <location>
        <position position="47"/>
    </location>
    <ligand>
        <name>a divalent metal cation</name>
        <dbReference type="ChEBI" id="CHEBI:60240"/>
        <label>4</label>
        <note>in cluster A</note>
    </ligand>
</feature>
<feature type="binding site" evidence="2">
    <location>
        <position position="49"/>
    </location>
    <ligand>
        <name>a divalent metal cation</name>
        <dbReference type="ChEBI" id="CHEBI:60240"/>
        <label>5</label>
        <note>in cluster A</note>
    </ligand>
</feature>
<feature type="binding site" evidence="2">
    <location>
        <position position="49"/>
    </location>
    <ligand>
        <name>a divalent metal cation</name>
        <dbReference type="ChEBI" id="CHEBI:60240"/>
        <label>7</label>
        <note>in cluster A</note>
    </ligand>
</feature>
<feature type="binding site" evidence="3">
    <location>
        <position position="54"/>
    </location>
    <ligand>
        <name>a divalent metal cation</name>
        <dbReference type="ChEBI" id="CHEBI:60240"/>
        <label>7</label>
        <note>in cluster A</note>
    </ligand>
</feature>
<feature type="binding site" evidence="2">
    <location>
        <position position="58"/>
    </location>
    <ligand>
        <name>a divalent metal cation</name>
        <dbReference type="ChEBI" id="CHEBI:60240"/>
        <label>7</label>
        <note>in cluster A</note>
    </ligand>
</feature>
<feature type="binding site" evidence="2">
    <location>
        <position position="59"/>
    </location>
    <ligand>
        <name>a divalent metal cation</name>
        <dbReference type="ChEBI" id="CHEBI:60240"/>
        <label>6</label>
        <note>in cluster A</note>
    </ligand>
</feature>
<feature type="binding site" evidence="2">
    <location>
        <position position="59"/>
    </location>
    <ligand>
        <name>a divalent metal cation</name>
        <dbReference type="ChEBI" id="CHEBI:60240"/>
        <label>7</label>
        <note>in cluster A</note>
    </ligand>
</feature>
<name>MT_PAGMA</name>
<organism>
    <name type="scientific">Pagrus major</name>
    <name type="common">Red sea bream</name>
    <name type="synonym">Chrysophrys major</name>
    <dbReference type="NCBI Taxonomy" id="143350"/>
    <lineage>
        <taxon>Eukaryota</taxon>
        <taxon>Metazoa</taxon>
        <taxon>Chordata</taxon>
        <taxon>Craniata</taxon>
        <taxon>Vertebrata</taxon>
        <taxon>Euteleostomi</taxon>
        <taxon>Actinopterygii</taxon>
        <taxon>Neopterygii</taxon>
        <taxon>Teleostei</taxon>
        <taxon>Neoteleostei</taxon>
        <taxon>Acanthomorphata</taxon>
        <taxon>Eupercaria</taxon>
        <taxon>Spariformes</taxon>
        <taxon>Sparidae</taxon>
        <taxon>Pagrus</taxon>
    </lineage>
</organism>
<keyword id="KW-0479">Metal-binding</keyword>
<keyword id="KW-0480">Metal-thiolate cluster</keyword>
<protein>
    <recommendedName>
        <fullName>Metallothionein</fullName>
        <shortName>MT</shortName>
    </recommendedName>
</protein>
<sequence>MDPCECSKTGTCNCGGSCTCTNCSCTTCKKSCCSCCPSGCTKCASGCVCKGKTCDTSCCQ</sequence>
<dbReference type="EMBL" id="AB039668">
    <property type="protein sequence ID" value="BAA92364.1"/>
    <property type="molecule type" value="mRNA"/>
</dbReference>
<dbReference type="SMR" id="Q9IB50"/>
<dbReference type="GO" id="GO:0046872">
    <property type="term" value="F:metal ion binding"/>
    <property type="evidence" value="ECO:0007669"/>
    <property type="project" value="UniProtKB-KW"/>
</dbReference>
<dbReference type="FunFam" id="4.10.10.10:FF:000001">
    <property type="entry name" value="Metallothionein"/>
    <property type="match status" value="1"/>
</dbReference>
<dbReference type="Gene3D" id="4.10.10.10">
    <property type="entry name" value="Metallothionein Isoform II"/>
    <property type="match status" value="1"/>
</dbReference>
<dbReference type="InterPro" id="IPR017854">
    <property type="entry name" value="Metalthion_dom_sf"/>
</dbReference>
<dbReference type="InterPro" id="IPR023587">
    <property type="entry name" value="Metalthion_dom_sf_vert"/>
</dbReference>
<dbReference type="InterPro" id="IPR000006">
    <property type="entry name" value="Metalthion_vert"/>
</dbReference>
<dbReference type="InterPro" id="IPR018064">
    <property type="entry name" value="Metalthion_vert_metal_BS"/>
</dbReference>
<dbReference type="PANTHER" id="PTHR23299">
    <property type="entry name" value="METALLOTHIONEIN"/>
    <property type="match status" value="1"/>
</dbReference>
<dbReference type="PANTHER" id="PTHR23299:SF24">
    <property type="entry name" value="METALLOTHIONEIN-1X"/>
    <property type="match status" value="1"/>
</dbReference>
<dbReference type="Pfam" id="PF00131">
    <property type="entry name" value="Metallothio"/>
    <property type="match status" value="1"/>
</dbReference>
<dbReference type="PRINTS" id="PR00860">
    <property type="entry name" value="MTVERTEBRATE"/>
</dbReference>
<dbReference type="SUPFAM" id="SSF57868">
    <property type="entry name" value="Metallothionein"/>
    <property type="match status" value="1"/>
</dbReference>
<dbReference type="PROSITE" id="PS00203">
    <property type="entry name" value="METALLOTHIONEIN_VRT"/>
    <property type="match status" value="1"/>
</dbReference>